<organism>
    <name type="scientific">Hyphomonas neptunium (strain ATCC 15444)</name>
    <dbReference type="NCBI Taxonomy" id="228405"/>
    <lineage>
        <taxon>Bacteria</taxon>
        <taxon>Pseudomonadati</taxon>
        <taxon>Pseudomonadota</taxon>
        <taxon>Alphaproteobacteria</taxon>
        <taxon>Hyphomonadales</taxon>
        <taxon>Hyphomonadaceae</taxon>
        <taxon>Hyphomonas</taxon>
    </lineage>
</organism>
<sequence>MAKKSAIEKNNRRKALAARYAAKRAQLKAAAMDENLSLEERFKARLKLAELPRNSAPNRVRNRCEITGRPRAFYRKLKMSRIALREYGSRGQVPGLVKSSW</sequence>
<evidence type="ECO:0000255" key="1">
    <source>
        <dbReference type="HAMAP-Rule" id="MF_00537"/>
    </source>
</evidence>
<evidence type="ECO:0000305" key="2"/>
<protein>
    <recommendedName>
        <fullName evidence="1">Small ribosomal subunit protein uS14</fullName>
    </recommendedName>
    <alternativeName>
        <fullName evidence="2">30S ribosomal protein S14</fullName>
    </alternativeName>
</protein>
<name>RS14_HYPNA</name>
<dbReference type="EMBL" id="CP000158">
    <property type="protein sequence ID" value="ABI77221.1"/>
    <property type="molecule type" value="Genomic_DNA"/>
</dbReference>
<dbReference type="RefSeq" id="WP_011647813.1">
    <property type="nucleotide sequence ID" value="NC_008358.1"/>
</dbReference>
<dbReference type="SMR" id="Q0BYC7"/>
<dbReference type="STRING" id="228405.HNE_2838"/>
<dbReference type="KEGG" id="hne:HNE_2838"/>
<dbReference type="eggNOG" id="COG0199">
    <property type="taxonomic scope" value="Bacteria"/>
</dbReference>
<dbReference type="HOGENOM" id="CLU_139869_0_1_5"/>
<dbReference type="Proteomes" id="UP000001959">
    <property type="component" value="Chromosome"/>
</dbReference>
<dbReference type="GO" id="GO:0005737">
    <property type="term" value="C:cytoplasm"/>
    <property type="evidence" value="ECO:0007669"/>
    <property type="project" value="UniProtKB-ARBA"/>
</dbReference>
<dbReference type="GO" id="GO:0015935">
    <property type="term" value="C:small ribosomal subunit"/>
    <property type="evidence" value="ECO:0007669"/>
    <property type="project" value="TreeGrafter"/>
</dbReference>
<dbReference type="GO" id="GO:0019843">
    <property type="term" value="F:rRNA binding"/>
    <property type="evidence" value="ECO:0007669"/>
    <property type="project" value="UniProtKB-UniRule"/>
</dbReference>
<dbReference type="GO" id="GO:0003735">
    <property type="term" value="F:structural constituent of ribosome"/>
    <property type="evidence" value="ECO:0007669"/>
    <property type="project" value="InterPro"/>
</dbReference>
<dbReference type="GO" id="GO:0006412">
    <property type="term" value="P:translation"/>
    <property type="evidence" value="ECO:0007669"/>
    <property type="project" value="UniProtKB-UniRule"/>
</dbReference>
<dbReference type="FunFam" id="1.10.287.1480:FF:000001">
    <property type="entry name" value="30S ribosomal protein S14"/>
    <property type="match status" value="1"/>
</dbReference>
<dbReference type="Gene3D" id="1.10.287.1480">
    <property type="match status" value="1"/>
</dbReference>
<dbReference type="HAMAP" id="MF_00537">
    <property type="entry name" value="Ribosomal_uS14_1"/>
    <property type="match status" value="1"/>
</dbReference>
<dbReference type="InterPro" id="IPR001209">
    <property type="entry name" value="Ribosomal_uS14"/>
</dbReference>
<dbReference type="InterPro" id="IPR023036">
    <property type="entry name" value="Ribosomal_uS14_bac/plastid"/>
</dbReference>
<dbReference type="InterPro" id="IPR018271">
    <property type="entry name" value="Ribosomal_uS14_CS"/>
</dbReference>
<dbReference type="NCBIfam" id="NF006477">
    <property type="entry name" value="PRK08881.1"/>
    <property type="match status" value="1"/>
</dbReference>
<dbReference type="PANTHER" id="PTHR19836">
    <property type="entry name" value="30S RIBOSOMAL PROTEIN S14"/>
    <property type="match status" value="1"/>
</dbReference>
<dbReference type="PANTHER" id="PTHR19836:SF19">
    <property type="entry name" value="SMALL RIBOSOMAL SUBUNIT PROTEIN US14M"/>
    <property type="match status" value="1"/>
</dbReference>
<dbReference type="Pfam" id="PF00253">
    <property type="entry name" value="Ribosomal_S14"/>
    <property type="match status" value="1"/>
</dbReference>
<dbReference type="SUPFAM" id="SSF57716">
    <property type="entry name" value="Glucocorticoid receptor-like (DNA-binding domain)"/>
    <property type="match status" value="1"/>
</dbReference>
<dbReference type="PROSITE" id="PS00527">
    <property type="entry name" value="RIBOSOMAL_S14"/>
    <property type="match status" value="1"/>
</dbReference>
<proteinExistence type="inferred from homology"/>
<accession>Q0BYC7</accession>
<reference key="1">
    <citation type="journal article" date="2006" name="J. Bacteriol.">
        <title>Comparative genomic evidence for a close relationship between the dimorphic prosthecate bacteria Hyphomonas neptunium and Caulobacter crescentus.</title>
        <authorList>
            <person name="Badger J.H."/>
            <person name="Hoover T.R."/>
            <person name="Brun Y.V."/>
            <person name="Weiner R.M."/>
            <person name="Laub M.T."/>
            <person name="Alexandre G."/>
            <person name="Mrazek J."/>
            <person name="Ren Q."/>
            <person name="Paulsen I.T."/>
            <person name="Nelson K.E."/>
            <person name="Khouri H.M."/>
            <person name="Radune D."/>
            <person name="Sosa J."/>
            <person name="Dodson R.J."/>
            <person name="Sullivan S.A."/>
            <person name="Rosovitz M.J."/>
            <person name="Madupu R."/>
            <person name="Brinkac L.M."/>
            <person name="Durkin A.S."/>
            <person name="Daugherty S.C."/>
            <person name="Kothari S.P."/>
            <person name="Giglio M.G."/>
            <person name="Zhou L."/>
            <person name="Haft D.H."/>
            <person name="Selengut J.D."/>
            <person name="Davidsen T.M."/>
            <person name="Yang Q."/>
            <person name="Zafar N."/>
            <person name="Ward N.L."/>
        </authorList>
    </citation>
    <scope>NUCLEOTIDE SEQUENCE [LARGE SCALE GENOMIC DNA]</scope>
    <source>
        <strain>ATCC 15444</strain>
    </source>
</reference>
<comment type="function">
    <text evidence="1">Binds 16S rRNA, required for the assembly of 30S particles and may also be responsible for determining the conformation of the 16S rRNA at the A site.</text>
</comment>
<comment type="subunit">
    <text evidence="1">Part of the 30S ribosomal subunit. Contacts proteins S3 and S10.</text>
</comment>
<comment type="similarity">
    <text evidence="1">Belongs to the universal ribosomal protein uS14 family.</text>
</comment>
<gene>
    <name evidence="1" type="primary">rpsN</name>
    <name type="ordered locus">HNE_2838</name>
</gene>
<feature type="chain" id="PRO_1000128422" description="Small ribosomal subunit protein uS14">
    <location>
        <begin position="1"/>
        <end position="101"/>
    </location>
</feature>
<keyword id="KW-1185">Reference proteome</keyword>
<keyword id="KW-0687">Ribonucleoprotein</keyword>
<keyword id="KW-0689">Ribosomal protein</keyword>
<keyword id="KW-0694">RNA-binding</keyword>
<keyword id="KW-0699">rRNA-binding</keyword>